<comment type="function">
    <text evidence="1">Together with the chaperonin GroEL, plays an essential role in assisting protein folding. The GroEL-GroES system forms a nano-cage that allows encapsulation of the non-native substrate proteins and provides a physical environment optimized to promote and accelerate protein folding. GroES binds to the apical surface of the GroEL ring, thereby capping the opening of the GroEL channel.</text>
</comment>
<comment type="subunit">
    <text evidence="1">Heptamer of 7 subunits arranged in a ring. Interacts with the chaperonin GroEL.</text>
</comment>
<comment type="subcellular location">
    <subcellularLocation>
        <location evidence="1">Cytoplasm</location>
    </subcellularLocation>
</comment>
<comment type="similarity">
    <text evidence="1 2">Belongs to the GroES chaperonin family.</text>
</comment>
<evidence type="ECO:0000255" key="1">
    <source>
        <dbReference type="HAMAP-Rule" id="MF_00580"/>
    </source>
</evidence>
<evidence type="ECO:0000305" key="2"/>
<feature type="chain" id="PRO_0000174682" description="Co-chaperonin GroES">
    <location>
        <begin position="1"/>
        <end position="98"/>
    </location>
</feature>
<feature type="sequence conflict" description="In Ref. 1; CAA48330." evidence="2" ref="1">
    <original>K</original>
    <variation>Q</variation>
    <location>
        <position position="72"/>
    </location>
</feature>
<feature type="sequence conflict" description="In Ref. 1; CAA48330." evidence="2" ref="1">
    <original>LL</original>
    <variation>SS</variation>
    <location>
        <begin position="85"/>
        <end position="86"/>
    </location>
</feature>
<gene>
    <name evidence="1" type="primary">groES</name>
    <name evidence="1" type="synonym">groS</name>
    <name type="ordered locus">Atu0683</name>
    <name type="ORF">AGR_C_1221</name>
</gene>
<protein>
    <recommendedName>
        <fullName evidence="1">Co-chaperonin GroES</fullName>
    </recommendedName>
    <alternativeName>
        <fullName evidence="1">10 kDa chaperonin</fullName>
    </alternativeName>
    <alternativeName>
        <fullName evidence="1">Chaperonin-10</fullName>
        <shortName evidence="1">Cpn10</shortName>
    </alternativeName>
</protein>
<proteinExistence type="inferred from homology"/>
<dbReference type="EMBL" id="X68263">
    <property type="protein sequence ID" value="CAA48330.1"/>
    <property type="molecule type" value="Genomic_DNA"/>
</dbReference>
<dbReference type="EMBL" id="AE007869">
    <property type="protein sequence ID" value="AAK86492.1"/>
    <property type="molecule type" value="Genomic_DNA"/>
</dbReference>
<dbReference type="PIR" id="A36917">
    <property type="entry name" value="A36917"/>
</dbReference>
<dbReference type="PIR" id="AE2660">
    <property type="entry name" value="AE2660"/>
</dbReference>
<dbReference type="PIR" id="C97442">
    <property type="entry name" value="C97442"/>
</dbReference>
<dbReference type="RefSeq" id="NP_353707.1">
    <property type="nucleotide sequence ID" value="NC_003062.2"/>
</dbReference>
<dbReference type="RefSeq" id="WP_003494080.1">
    <property type="nucleotide sequence ID" value="NC_003062.2"/>
</dbReference>
<dbReference type="SMR" id="P30780"/>
<dbReference type="STRING" id="176299.Atu0683"/>
<dbReference type="EnsemblBacteria" id="AAK86492">
    <property type="protein sequence ID" value="AAK86492"/>
    <property type="gene ID" value="Atu0683"/>
</dbReference>
<dbReference type="GeneID" id="97363424"/>
<dbReference type="KEGG" id="atu:Atu0683"/>
<dbReference type="PATRIC" id="fig|176299.10.peg.679"/>
<dbReference type="eggNOG" id="COG0234">
    <property type="taxonomic scope" value="Bacteria"/>
</dbReference>
<dbReference type="HOGENOM" id="CLU_132825_1_0_5"/>
<dbReference type="OrthoDB" id="9806791at2"/>
<dbReference type="PhylomeDB" id="P30780"/>
<dbReference type="BioCyc" id="AGRO:ATU0683-MONOMER"/>
<dbReference type="PRO" id="PR:P30780"/>
<dbReference type="Proteomes" id="UP000000813">
    <property type="component" value="Chromosome circular"/>
</dbReference>
<dbReference type="GO" id="GO:0005737">
    <property type="term" value="C:cytoplasm"/>
    <property type="evidence" value="ECO:0007669"/>
    <property type="project" value="UniProtKB-SubCell"/>
</dbReference>
<dbReference type="GO" id="GO:0005524">
    <property type="term" value="F:ATP binding"/>
    <property type="evidence" value="ECO:0007669"/>
    <property type="project" value="InterPro"/>
</dbReference>
<dbReference type="GO" id="GO:0046872">
    <property type="term" value="F:metal ion binding"/>
    <property type="evidence" value="ECO:0007669"/>
    <property type="project" value="TreeGrafter"/>
</dbReference>
<dbReference type="GO" id="GO:0044183">
    <property type="term" value="F:protein folding chaperone"/>
    <property type="evidence" value="ECO:0007669"/>
    <property type="project" value="InterPro"/>
</dbReference>
<dbReference type="GO" id="GO:0051087">
    <property type="term" value="F:protein-folding chaperone binding"/>
    <property type="evidence" value="ECO:0007669"/>
    <property type="project" value="TreeGrafter"/>
</dbReference>
<dbReference type="GO" id="GO:0051082">
    <property type="term" value="F:unfolded protein binding"/>
    <property type="evidence" value="ECO:0007669"/>
    <property type="project" value="TreeGrafter"/>
</dbReference>
<dbReference type="GO" id="GO:0051085">
    <property type="term" value="P:chaperone cofactor-dependent protein refolding"/>
    <property type="evidence" value="ECO:0007669"/>
    <property type="project" value="TreeGrafter"/>
</dbReference>
<dbReference type="CDD" id="cd00320">
    <property type="entry name" value="cpn10"/>
    <property type="match status" value="1"/>
</dbReference>
<dbReference type="FunFam" id="2.30.33.40:FF:000001">
    <property type="entry name" value="10 kDa chaperonin"/>
    <property type="match status" value="1"/>
</dbReference>
<dbReference type="Gene3D" id="2.30.33.40">
    <property type="entry name" value="GroES chaperonin"/>
    <property type="match status" value="1"/>
</dbReference>
<dbReference type="HAMAP" id="MF_00580">
    <property type="entry name" value="CH10"/>
    <property type="match status" value="1"/>
</dbReference>
<dbReference type="InterPro" id="IPR020818">
    <property type="entry name" value="Chaperonin_GroES"/>
</dbReference>
<dbReference type="InterPro" id="IPR037124">
    <property type="entry name" value="Chaperonin_GroES_sf"/>
</dbReference>
<dbReference type="InterPro" id="IPR018369">
    <property type="entry name" value="Chaprnonin_Cpn10_CS"/>
</dbReference>
<dbReference type="InterPro" id="IPR011032">
    <property type="entry name" value="GroES-like_sf"/>
</dbReference>
<dbReference type="NCBIfam" id="NF001527">
    <property type="entry name" value="PRK00364.1-2"/>
    <property type="match status" value="1"/>
</dbReference>
<dbReference type="NCBIfam" id="NF001529">
    <property type="entry name" value="PRK00364.1-5"/>
    <property type="match status" value="1"/>
</dbReference>
<dbReference type="NCBIfam" id="NF001531">
    <property type="entry name" value="PRK00364.2-2"/>
    <property type="match status" value="1"/>
</dbReference>
<dbReference type="NCBIfam" id="NF001533">
    <property type="entry name" value="PRK00364.2-4"/>
    <property type="match status" value="1"/>
</dbReference>
<dbReference type="NCBIfam" id="NF001534">
    <property type="entry name" value="PRK00364.2-5"/>
    <property type="match status" value="1"/>
</dbReference>
<dbReference type="PANTHER" id="PTHR10772">
    <property type="entry name" value="10 KDA HEAT SHOCK PROTEIN"/>
    <property type="match status" value="1"/>
</dbReference>
<dbReference type="PANTHER" id="PTHR10772:SF58">
    <property type="entry name" value="CO-CHAPERONIN GROES"/>
    <property type="match status" value="1"/>
</dbReference>
<dbReference type="Pfam" id="PF00166">
    <property type="entry name" value="Cpn10"/>
    <property type="match status" value="1"/>
</dbReference>
<dbReference type="PRINTS" id="PR00297">
    <property type="entry name" value="CHAPERONIN10"/>
</dbReference>
<dbReference type="SMART" id="SM00883">
    <property type="entry name" value="Cpn10"/>
    <property type="match status" value="1"/>
</dbReference>
<dbReference type="SUPFAM" id="SSF50129">
    <property type="entry name" value="GroES-like"/>
    <property type="match status" value="1"/>
</dbReference>
<dbReference type="PROSITE" id="PS00681">
    <property type="entry name" value="CHAPERONINS_CPN10"/>
    <property type="match status" value="1"/>
</dbReference>
<organism>
    <name type="scientific">Agrobacterium fabrum (strain C58 / ATCC 33970)</name>
    <name type="common">Agrobacterium tumefaciens (strain C58)</name>
    <dbReference type="NCBI Taxonomy" id="176299"/>
    <lineage>
        <taxon>Bacteria</taxon>
        <taxon>Pseudomonadati</taxon>
        <taxon>Pseudomonadota</taxon>
        <taxon>Alphaproteobacteria</taxon>
        <taxon>Hyphomicrobiales</taxon>
        <taxon>Rhizobiaceae</taxon>
        <taxon>Rhizobium/Agrobacterium group</taxon>
        <taxon>Agrobacterium</taxon>
        <taxon>Agrobacterium tumefaciens complex</taxon>
    </lineage>
</organism>
<sequence length="98" mass="10546">MTSTNFRPLHDRVVVRRVESEAKTKGGIIIPDTAKEKPQEGEIVAVGSGARDEAGKVVALDVKVGDRVLFGKWSGTEVKLDGEDLLIMKEADIMGIIG</sequence>
<accession>P30780</accession>
<name>CH10_AGRFC</name>
<reference key="1">
    <citation type="journal article" date="1993" name="J. Bacteriol.">
        <title>Heat shock transcription of the groESL operon of Agrobacterium tumefaciens may involve a hairpin-loop structure.</title>
        <authorList>
            <person name="Segal G."/>
            <person name="Ron E.Z."/>
        </authorList>
    </citation>
    <scope>NUCLEOTIDE SEQUENCE [GENOMIC DNA]</scope>
</reference>
<reference key="2">
    <citation type="journal article" date="2001" name="Science">
        <title>The genome of the natural genetic engineer Agrobacterium tumefaciens C58.</title>
        <authorList>
            <person name="Wood D.W."/>
            <person name="Setubal J.C."/>
            <person name="Kaul R."/>
            <person name="Monks D.E."/>
            <person name="Kitajima J.P."/>
            <person name="Okura V.K."/>
            <person name="Zhou Y."/>
            <person name="Chen L."/>
            <person name="Wood G.E."/>
            <person name="Almeida N.F. Jr."/>
            <person name="Woo L."/>
            <person name="Chen Y."/>
            <person name="Paulsen I.T."/>
            <person name="Eisen J.A."/>
            <person name="Karp P.D."/>
            <person name="Bovee D. Sr."/>
            <person name="Chapman P."/>
            <person name="Clendenning J."/>
            <person name="Deatherage G."/>
            <person name="Gillet W."/>
            <person name="Grant C."/>
            <person name="Kutyavin T."/>
            <person name="Levy R."/>
            <person name="Li M.-J."/>
            <person name="McClelland E."/>
            <person name="Palmieri A."/>
            <person name="Raymond C."/>
            <person name="Rouse G."/>
            <person name="Saenphimmachak C."/>
            <person name="Wu Z."/>
            <person name="Romero P."/>
            <person name="Gordon D."/>
            <person name="Zhang S."/>
            <person name="Yoo H."/>
            <person name="Tao Y."/>
            <person name="Biddle P."/>
            <person name="Jung M."/>
            <person name="Krespan W."/>
            <person name="Perry M."/>
            <person name="Gordon-Kamm B."/>
            <person name="Liao L."/>
            <person name="Kim S."/>
            <person name="Hendrick C."/>
            <person name="Zhao Z.-Y."/>
            <person name="Dolan M."/>
            <person name="Chumley F."/>
            <person name="Tingey S.V."/>
            <person name="Tomb J.-F."/>
            <person name="Gordon M.P."/>
            <person name="Olson M.V."/>
            <person name="Nester E.W."/>
        </authorList>
    </citation>
    <scope>NUCLEOTIDE SEQUENCE [LARGE SCALE GENOMIC DNA]</scope>
    <source>
        <strain>C58 / ATCC 33970</strain>
    </source>
</reference>
<reference key="3">
    <citation type="journal article" date="2001" name="Science">
        <title>Genome sequence of the plant pathogen and biotechnology agent Agrobacterium tumefaciens C58.</title>
        <authorList>
            <person name="Goodner B."/>
            <person name="Hinkle G."/>
            <person name="Gattung S."/>
            <person name="Miller N."/>
            <person name="Blanchard M."/>
            <person name="Qurollo B."/>
            <person name="Goldman B.S."/>
            <person name="Cao Y."/>
            <person name="Askenazi M."/>
            <person name="Halling C."/>
            <person name="Mullin L."/>
            <person name="Houmiel K."/>
            <person name="Gordon J."/>
            <person name="Vaudin M."/>
            <person name="Iartchouk O."/>
            <person name="Epp A."/>
            <person name="Liu F."/>
            <person name="Wollam C."/>
            <person name="Allinger M."/>
            <person name="Doughty D."/>
            <person name="Scott C."/>
            <person name="Lappas C."/>
            <person name="Markelz B."/>
            <person name="Flanagan C."/>
            <person name="Crowell C."/>
            <person name="Gurson J."/>
            <person name="Lomo C."/>
            <person name="Sear C."/>
            <person name="Strub G."/>
            <person name="Cielo C."/>
            <person name="Slater S."/>
        </authorList>
    </citation>
    <scope>NUCLEOTIDE SEQUENCE [LARGE SCALE GENOMIC DNA]</scope>
    <source>
        <strain>C58 / ATCC 33970</strain>
    </source>
</reference>
<keyword id="KW-0143">Chaperone</keyword>
<keyword id="KW-0963">Cytoplasm</keyword>
<keyword id="KW-1185">Reference proteome</keyword>